<evidence type="ECO:0000255" key="1">
    <source>
        <dbReference type="HAMAP-Rule" id="MF_00558"/>
    </source>
</evidence>
<gene>
    <name evidence="1" type="primary">sucC</name>
    <name type="ordered locus">HNE_0310</name>
</gene>
<sequence>MNIHEYQAKALLKSFGAPVAEGVPVLSLADVQKAIDTLPGPLWVVKSQIHAGGRGKGKFIEKEAGEKGGVRLAFNKEDVKKHAEAMLGNHLVTAQTSAAGKQVNRLYIEDGADIEKELYLSILVDRATSNVAFVVSTEGGMDIEAVAHDTPEKILTVQIDPMAGVTPADAAKINSALNLSGSAAEDGLKLYPILYKAFVEKDMAMLEVNPLIVMKDGHLRVLDAKVSFDGNALFRHPDVAALKDETEQDAKELEAAEWDLAYIALDGTIGCMVNGAGLAMATMDIIKLYGEEPANFCDVGGGAGKEKVAAAFKIIMKDPNVKGILVNIFGGIMKCDVIAEGVIAAVKETNLAVPLVVRLEGTNVDLGKKIIRESGLNVIPADDLDDAAQKIVKAVRG</sequence>
<accession>Q0C5F3</accession>
<reference key="1">
    <citation type="journal article" date="2006" name="J. Bacteriol.">
        <title>Comparative genomic evidence for a close relationship between the dimorphic prosthecate bacteria Hyphomonas neptunium and Caulobacter crescentus.</title>
        <authorList>
            <person name="Badger J.H."/>
            <person name="Hoover T.R."/>
            <person name="Brun Y.V."/>
            <person name="Weiner R.M."/>
            <person name="Laub M.T."/>
            <person name="Alexandre G."/>
            <person name="Mrazek J."/>
            <person name="Ren Q."/>
            <person name="Paulsen I.T."/>
            <person name="Nelson K.E."/>
            <person name="Khouri H.M."/>
            <person name="Radune D."/>
            <person name="Sosa J."/>
            <person name="Dodson R.J."/>
            <person name="Sullivan S.A."/>
            <person name="Rosovitz M.J."/>
            <person name="Madupu R."/>
            <person name="Brinkac L.M."/>
            <person name="Durkin A.S."/>
            <person name="Daugherty S.C."/>
            <person name="Kothari S.P."/>
            <person name="Giglio M.G."/>
            <person name="Zhou L."/>
            <person name="Haft D.H."/>
            <person name="Selengut J.D."/>
            <person name="Davidsen T.M."/>
            <person name="Yang Q."/>
            <person name="Zafar N."/>
            <person name="Ward N.L."/>
        </authorList>
    </citation>
    <scope>NUCLEOTIDE SEQUENCE [LARGE SCALE GENOMIC DNA]</scope>
    <source>
        <strain>ATCC 15444</strain>
    </source>
</reference>
<dbReference type="EC" id="6.2.1.5" evidence="1"/>
<dbReference type="EMBL" id="CP000158">
    <property type="protein sequence ID" value="ABI77695.1"/>
    <property type="molecule type" value="Genomic_DNA"/>
</dbReference>
<dbReference type="RefSeq" id="WP_011645340.1">
    <property type="nucleotide sequence ID" value="NC_008358.1"/>
</dbReference>
<dbReference type="SMR" id="Q0C5F3"/>
<dbReference type="STRING" id="228405.HNE_0310"/>
<dbReference type="KEGG" id="hne:HNE_0310"/>
<dbReference type="eggNOG" id="COG0045">
    <property type="taxonomic scope" value="Bacteria"/>
</dbReference>
<dbReference type="HOGENOM" id="CLU_037430_0_2_5"/>
<dbReference type="UniPathway" id="UPA00223">
    <property type="reaction ID" value="UER00999"/>
</dbReference>
<dbReference type="Proteomes" id="UP000001959">
    <property type="component" value="Chromosome"/>
</dbReference>
<dbReference type="GO" id="GO:0005829">
    <property type="term" value="C:cytosol"/>
    <property type="evidence" value="ECO:0007669"/>
    <property type="project" value="TreeGrafter"/>
</dbReference>
<dbReference type="GO" id="GO:0042709">
    <property type="term" value="C:succinate-CoA ligase complex"/>
    <property type="evidence" value="ECO:0007669"/>
    <property type="project" value="TreeGrafter"/>
</dbReference>
<dbReference type="GO" id="GO:0005524">
    <property type="term" value="F:ATP binding"/>
    <property type="evidence" value="ECO:0007669"/>
    <property type="project" value="UniProtKB-UniRule"/>
</dbReference>
<dbReference type="GO" id="GO:0000287">
    <property type="term" value="F:magnesium ion binding"/>
    <property type="evidence" value="ECO:0007669"/>
    <property type="project" value="UniProtKB-UniRule"/>
</dbReference>
<dbReference type="GO" id="GO:0004775">
    <property type="term" value="F:succinate-CoA ligase (ADP-forming) activity"/>
    <property type="evidence" value="ECO:0007669"/>
    <property type="project" value="UniProtKB-UniRule"/>
</dbReference>
<dbReference type="GO" id="GO:0004776">
    <property type="term" value="F:succinate-CoA ligase (GDP-forming) activity"/>
    <property type="evidence" value="ECO:0007669"/>
    <property type="project" value="RHEA"/>
</dbReference>
<dbReference type="GO" id="GO:0006104">
    <property type="term" value="P:succinyl-CoA metabolic process"/>
    <property type="evidence" value="ECO:0007669"/>
    <property type="project" value="TreeGrafter"/>
</dbReference>
<dbReference type="GO" id="GO:0006099">
    <property type="term" value="P:tricarboxylic acid cycle"/>
    <property type="evidence" value="ECO:0007669"/>
    <property type="project" value="UniProtKB-UniRule"/>
</dbReference>
<dbReference type="FunFam" id="3.30.1490.20:FF:000002">
    <property type="entry name" value="Succinate--CoA ligase [ADP-forming] subunit beta"/>
    <property type="match status" value="1"/>
</dbReference>
<dbReference type="FunFam" id="3.30.470.20:FF:000002">
    <property type="entry name" value="Succinate--CoA ligase [ADP-forming] subunit beta"/>
    <property type="match status" value="1"/>
</dbReference>
<dbReference type="FunFam" id="3.40.50.261:FF:000001">
    <property type="entry name" value="Succinate--CoA ligase [ADP-forming] subunit beta"/>
    <property type="match status" value="1"/>
</dbReference>
<dbReference type="Gene3D" id="3.30.1490.20">
    <property type="entry name" value="ATP-grasp fold, A domain"/>
    <property type="match status" value="1"/>
</dbReference>
<dbReference type="Gene3D" id="3.30.470.20">
    <property type="entry name" value="ATP-grasp fold, B domain"/>
    <property type="match status" value="1"/>
</dbReference>
<dbReference type="Gene3D" id="3.40.50.261">
    <property type="entry name" value="Succinyl-CoA synthetase domains"/>
    <property type="match status" value="1"/>
</dbReference>
<dbReference type="HAMAP" id="MF_00558">
    <property type="entry name" value="Succ_CoA_beta"/>
    <property type="match status" value="1"/>
</dbReference>
<dbReference type="InterPro" id="IPR011761">
    <property type="entry name" value="ATP-grasp"/>
</dbReference>
<dbReference type="InterPro" id="IPR013650">
    <property type="entry name" value="ATP-grasp_succ-CoA_synth-type"/>
</dbReference>
<dbReference type="InterPro" id="IPR013815">
    <property type="entry name" value="ATP_grasp_subdomain_1"/>
</dbReference>
<dbReference type="InterPro" id="IPR017866">
    <property type="entry name" value="Succ-CoA_synthase_bsu_CS"/>
</dbReference>
<dbReference type="InterPro" id="IPR005811">
    <property type="entry name" value="SUCC_ACL_C"/>
</dbReference>
<dbReference type="InterPro" id="IPR005809">
    <property type="entry name" value="Succ_CoA_ligase-like_bsu"/>
</dbReference>
<dbReference type="InterPro" id="IPR016102">
    <property type="entry name" value="Succinyl-CoA_synth-like"/>
</dbReference>
<dbReference type="NCBIfam" id="NF001913">
    <property type="entry name" value="PRK00696.1"/>
    <property type="match status" value="1"/>
</dbReference>
<dbReference type="NCBIfam" id="TIGR01016">
    <property type="entry name" value="sucCoAbeta"/>
    <property type="match status" value="1"/>
</dbReference>
<dbReference type="PANTHER" id="PTHR11815:SF10">
    <property type="entry name" value="SUCCINATE--COA LIGASE [GDP-FORMING] SUBUNIT BETA, MITOCHONDRIAL"/>
    <property type="match status" value="1"/>
</dbReference>
<dbReference type="PANTHER" id="PTHR11815">
    <property type="entry name" value="SUCCINYL-COA SYNTHETASE BETA CHAIN"/>
    <property type="match status" value="1"/>
</dbReference>
<dbReference type="Pfam" id="PF08442">
    <property type="entry name" value="ATP-grasp_2"/>
    <property type="match status" value="1"/>
</dbReference>
<dbReference type="Pfam" id="PF00549">
    <property type="entry name" value="Ligase_CoA"/>
    <property type="match status" value="1"/>
</dbReference>
<dbReference type="PIRSF" id="PIRSF001554">
    <property type="entry name" value="SucCS_beta"/>
    <property type="match status" value="1"/>
</dbReference>
<dbReference type="SUPFAM" id="SSF56059">
    <property type="entry name" value="Glutathione synthetase ATP-binding domain-like"/>
    <property type="match status" value="1"/>
</dbReference>
<dbReference type="SUPFAM" id="SSF52210">
    <property type="entry name" value="Succinyl-CoA synthetase domains"/>
    <property type="match status" value="1"/>
</dbReference>
<dbReference type="PROSITE" id="PS50975">
    <property type="entry name" value="ATP_GRASP"/>
    <property type="match status" value="1"/>
</dbReference>
<dbReference type="PROSITE" id="PS01217">
    <property type="entry name" value="SUCCINYL_COA_LIG_3"/>
    <property type="match status" value="1"/>
</dbReference>
<organism>
    <name type="scientific">Hyphomonas neptunium (strain ATCC 15444)</name>
    <dbReference type="NCBI Taxonomy" id="228405"/>
    <lineage>
        <taxon>Bacteria</taxon>
        <taxon>Pseudomonadati</taxon>
        <taxon>Pseudomonadota</taxon>
        <taxon>Alphaproteobacteria</taxon>
        <taxon>Hyphomonadales</taxon>
        <taxon>Hyphomonadaceae</taxon>
        <taxon>Hyphomonas</taxon>
    </lineage>
</organism>
<proteinExistence type="inferred from homology"/>
<name>SUCC_HYPNA</name>
<feature type="chain" id="PRO_1000082106" description="Succinate--CoA ligase [ADP-forming] subunit beta">
    <location>
        <begin position="1"/>
        <end position="397"/>
    </location>
</feature>
<feature type="domain" description="ATP-grasp" evidence="1">
    <location>
        <begin position="9"/>
        <end position="254"/>
    </location>
</feature>
<feature type="binding site" evidence="1">
    <location>
        <position position="46"/>
    </location>
    <ligand>
        <name>ATP</name>
        <dbReference type="ChEBI" id="CHEBI:30616"/>
    </ligand>
</feature>
<feature type="binding site" evidence="1">
    <location>
        <begin position="53"/>
        <end position="55"/>
    </location>
    <ligand>
        <name>ATP</name>
        <dbReference type="ChEBI" id="CHEBI:30616"/>
    </ligand>
</feature>
<feature type="binding site" evidence="1">
    <location>
        <position position="109"/>
    </location>
    <ligand>
        <name>ATP</name>
        <dbReference type="ChEBI" id="CHEBI:30616"/>
    </ligand>
</feature>
<feature type="binding site" evidence="1">
    <location>
        <position position="112"/>
    </location>
    <ligand>
        <name>ATP</name>
        <dbReference type="ChEBI" id="CHEBI:30616"/>
    </ligand>
</feature>
<feature type="binding site" evidence="1">
    <location>
        <position position="117"/>
    </location>
    <ligand>
        <name>ATP</name>
        <dbReference type="ChEBI" id="CHEBI:30616"/>
    </ligand>
</feature>
<feature type="binding site" evidence="1">
    <location>
        <position position="209"/>
    </location>
    <ligand>
        <name>Mg(2+)</name>
        <dbReference type="ChEBI" id="CHEBI:18420"/>
    </ligand>
</feature>
<feature type="binding site" evidence="1">
    <location>
        <position position="223"/>
    </location>
    <ligand>
        <name>Mg(2+)</name>
        <dbReference type="ChEBI" id="CHEBI:18420"/>
    </ligand>
</feature>
<feature type="binding site" evidence="1">
    <location>
        <position position="274"/>
    </location>
    <ligand>
        <name>substrate</name>
        <note>ligand shared with subunit alpha</note>
    </ligand>
</feature>
<feature type="binding site" evidence="1">
    <location>
        <begin position="331"/>
        <end position="333"/>
    </location>
    <ligand>
        <name>substrate</name>
        <note>ligand shared with subunit alpha</note>
    </ligand>
</feature>
<comment type="function">
    <text evidence="1">Succinyl-CoA synthetase functions in the citric acid cycle (TCA), coupling the hydrolysis of succinyl-CoA to the synthesis of either ATP or GTP and thus represents the only step of substrate-level phosphorylation in the TCA. The beta subunit provides nucleotide specificity of the enzyme and binds the substrate succinate, while the binding sites for coenzyme A and phosphate are found in the alpha subunit.</text>
</comment>
<comment type="catalytic activity">
    <reaction evidence="1">
        <text>succinate + ATP + CoA = succinyl-CoA + ADP + phosphate</text>
        <dbReference type="Rhea" id="RHEA:17661"/>
        <dbReference type="ChEBI" id="CHEBI:30031"/>
        <dbReference type="ChEBI" id="CHEBI:30616"/>
        <dbReference type="ChEBI" id="CHEBI:43474"/>
        <dbReference type="ChEBI" id="CHEBI:57287"/>
        <dbReference type="ChEBI" id="CHEBI:57292"/>
        <dbReference type="ChEBI" id="CHEBI:456216"/>
        <dbReference type="EC" id="6.2.1.5"/>
    </reaction>
    <physiologicalReaction direction="right-to-left" evidence="1">
        <dbReference type="Rhea" id="RHEA:17663"/>
    </physiologicalReaction>
</comment>
<comment type="catalytic activity">
    <reaction evidence="1">
        <text>GTP + succinate + CoA = succinyl-CoA + GDP + phosphate</text>
        <dbReference type="Rhea" id="RHEA:22120"/>
        <dbReference type="ChEBI" id="CHEBI:30031"/>
        <dbReference type="ChEBI" id="CHEBI:37565"/>
        <dbReference type="ChEBI" id="CHEBI:43474"/>
        <dbReference type="ChEBI" id="CHEBI:57287"/>
        <dbReference type="ChEBI" id="CHEBI:57292"/>
        <dbReference type="ChEBI" id="CHEBI:58189"/>
    </reaction>
    <physiologicalReaction direction="right-to-left" evidence="1">
        <dbReference type="Rhea" id="RHEA:22122"/>
    </physiologicalReaction>
</comment>
<comment type="cofactor">
    <cofactor evidence="1">
        <name>Mg(2+)</name>
        <dbReference type="ChEBI" id="CHEBI:18420"/>
    </cofactor>
    <text evidence="1">Binds 1 Mg(2+) ion per subunit.</text>
</comment>
<comment type="pathway">
    <text evidence="1">Carbohydrate metabolism; tricarboxylic acid cycle; succinate from succinyl-CoA (ligase route): step 1/1.</text>
</comment>
<comment type="subunit">
    <text evidence="1">Heterotetramer of two alpha and two beta subunits.</text>
</comment>
<comment type="similarity">
    <text evidence="1">Belongs to the succinate/malate CoA ligase beta subunit family.</text>
</comment>
<keyword id="KW-0067">ATP-binding</keyword>
<keyword id="KW-0436">Ligase</keyword>
<keyword id="KW-0460">Magnesium</keyword>
<keyword id="KW-0479">Metal-binding</keyword>
<keyword id="KW-0547">Nucleotide-binding</keyword>
<keyword id="KW-1185">Reference proteome</keyword>
<keyword id="KW-0816">Tricarboxylic acid cycle</keyword>
<protein>
    <recommendedName>
        <fullName evidence="1">Succinate--CoA ligase [ADP-forming] subunit beta</fullName>
        <ecNumber evidence="1">6.2.1.5</ecNumber>
    </recommendedName>
    <alternativeName>
        <fullName evidence="1">Succinyl-CoA synthetase subunit beta</fullName>
        <shortName evidence="1">SCS-beta</shortName>
    </alternativeName>
</protein>